<dbReference type="EMBL" id="CU329671">
    <property type="protein sequence ID" value="CAB08785.1"/>
    <property type="molecule type" value="Genomic_DNA"/>
</dbReference>
<dbReference type="PIR" id="T40004">
    <property type="entry name" value="T40004"/>
</dbReference>
<dbReference type="RefSeq" id="NP_596357.1">
    <property type="nucleotide sequence ID" value="NM_001022278.2"/>
</dbReference>
<dbReference type="SMR" id="P87150"/>
<dbReference type="BioGRID" id="277090">
    <property type="interactions" value="12"/>
</dbReference>
<dbReference type="FunCoup" id="P87150">
    <property type="interactions" value="28"/>
</dbReference>
<dbReference type="IntAct" id="P87150">
    <property type="interactions" value="1"/>
</dbReference>
<dbReference type="STRING" id="284812.P87150"/>
<dbReference type="iPTMnet" id="P87150"/>
<dbReference type="PaxDb" id="4896-SPBC25H2.09.1"/>
<dbReference type="EnsemblFungi" id="SPBC25H2.09.1">
    <property type="protein sequence ID" value="SPBC25H2.09.1:pep"/>
    <property type="gene ID" value="SPBC25H2.09"/>
</dbReference>
<dbReference type="GeneID" id="2540563"/>
<dbReference type="KEGG" id="spo:2540563"/>
<dbReference type="PomBase" id="SPBC25H2.09">
    <property type="gene designation" value="mic19"/>
</dbReference>
<dbReference type="VEuPathDB" id="FungiDB:SPBC25H2.09"/>
<dbReference type="eggNOG" id="ENOG502SDJV">
    <property type="taxonomic scope" value="Eukaryota"/>
</dbReference>
<dbReference type="HOGENOM" id="CLU_1644699_0_0_1"/>
<dbReference type="InParanoid" id="P87150"/>
<dbReference type="OMA" id="CMSENAD"/>
<dbReference type="PhylomeDB" id="P87150"/>
<dbReference type="PRO" id="PR:P87150"/>
<dbReference type="Proteomes" id="UP000002485">
    <property type="component" value="Chromosome II"/>
</dbReference>
<dbReference type="GO" id="GO:0061617">
    <property type="term" value="C:MICOS complex"/>
    <property type="evidence" value="ECO:0000269"/>
    <property type="project" value="PomBase"/>
</dbReference>
<dbReference type="GO" id="GO:0044284">
    <property type="term" value="C:mitochondrial crista junction"/>
    <property type="evidence" value="ECO:0000266"/>
    <property type="project" value="PomBase"/>
</dbReference>
<dbReference type="GO" id="GO:0042407">
    <property type="term" value="P:cristae formation"/>
    <property type="evidence" value="ECO:0000269"/>
    <property type="project" value="PomBase"/>
</dbReference>
<dbReference type="InterPro" id="IPR012471">
    <property type="entry name" value="DUF1690"/>
</dbReference>
<dbReference type="Pfam" id="PF07956">
    <property type="entry name" value="DUF1690"/>
    <property type="match status" value="1"/>
</dbReference>
<proteinExistence type="inferred from homology"/>
<gene>
    <name type="primary">mic19</name>
    <name type="ORF">SPBC25H2.09</name>
</gene>
<evidence type="ECO:0000250" key="1"/>
<evidence type="ECO:0000305" key="2"/>
<name>MIC19_SCHPO</name>
<reference key="1">
    <citation type="journal article" date="2002" name="Nature">
        <title>The genome sequence of Schizosaccharomyces pombe.</title>
        <authorList>
            <person name="Wood V."/>
            <person name="Gwilliam R."/>
            <person name="Rajandream M.A."/>
            <person name="Lyne M.H."/>
            <person name="Lyne R."/>
            <person name="Stewart A."/>
            <person name="Sgouros J.G."/>
            <person name="Peat N."/>
            <person name="Hayles J."/>
            <person name="Baker S.G."/>
            <person name="Basham D."/>
            <person name="Bowman S."/>
            <person name="Brooks K."/>
            <person name="Brown D."/>
            <person name="Brown S."/>
            <person name="Chillingworth T."/>
            <person name="Churcher C.M."/>
            <person name="Collins M."/>
            <person name="Connor R."/>
            <person name="Cronin A."/>
            <person name="Davis P."/>
            <person name="Feltwell T."/>
            <person name="Fraser A."/>
            <person name="Gentles S."/>
            <person name="Goble A."/>
            <person name="Hamlin N."/>
            <person name="Harris D.E."/>
            <person name="Hidalgo J."/>
            <person name="Hodgson G."/>
            <person name="Holroyd S."/>
            <person name="Hornsby T."/>
            <person name="Howarth S."/>
            <person name="Huckle E.J."/>
            <person name="Hunt S."/>
            <person name="Jagels K."/>
            <person name="James K.D."/>
            <person name="Jones L."/>
            <person name="Jones M."/>
            <person name="Leather S."/>
            <person name="McDonald S."/>
            <person name="McLean J."/>
            <person name="Mooney P."/>
            <person name="Moule S."/>
            <person name="Mungall K.L."/>
            <person name="Murphy L.D."/>
            <person name="Niblett D."/>
            <person name="Odell C."/>
            <person name="Oliver K."/>
            <person name="O'Neil S."/>
            <person name="Pearson D."/>
            <person name="Quail M.A."/>
            <person name="Rabbinowitsch E."/>
            <person name="Rutherford K.M."/>
            <person name="Rutter S."/>
            <person name="Saunders D."/>
            <person name="Seeger K."/>
            <person name="Sharp S."/>
            <person name="Skelton J."/>
            <person name="Simmonds M.N."/>
            <person name="Squares R."/>
            <person name="Squares S."/>
            <person name="Stevens K."/>
            <person name="Taylor K."/>
            <person name="Taylor R.G."/>
            <person name="Tivey A."/>
            <person name="Walsh S.V."/>
            <person name="Warren T."/>
            <person name="Whitehead S."/>
            <person name="Woodward J.R."/>
            <person name="Volckaert G."/>
            <person name="Aert R."/>
            <person name="Robben J."/>
            <person name="Grymonprez B."/>
            <person name="Weltjens I."/>
            <person name="Vanstreels E."/>
            <person name="Rieger M."/>
            <person name="Schaefer M."/>
            <person name="Mueller-Auer S."/>
            <person name="Gabel C."/>
            <person name="Fuchs M."/>
            <person name="Duesterhoeft A."/>
            <person name="Fritzc C."/>
            <person name="Holzer E."/>
            <person name="Moestl D."/>
            <person name="Hilbert H."/>
            <person name="Borzym K."/>
            <person name="Langer I."/>
            <person name="Beck A."/>
            <person name="Lehrach H."/>
            <person name="Reinhardt R."/>
            <person name="Pohl T.M."/>
            <person name="Eger P."/>
            <person name="Zimmermann W."/>
            <person name="Wedler H."/>
            <person name="Wambutt R."/>
            <person name="Purnelle B."/>
            <person name="Goffeau A."/>
            <person name="Cadieu E."/>
            <person name="Dreano S."/>
            <person name="Gloux S."/>
            <person name="Lelaure V."/>
            <person name="Mottier S."/>
            <person name="Galibert F."/>
            <person name="Aves S.J."/>
            <person name="Xiang Z."/>
            <person name="Hunt C."/>
            <person name="Moore K."/>
            <person name="Hurst S.M."/>
            <person name="Lucas M."/>
            <person name="Rochet M."/>
            <person name="Gaillardin C."/>
            <person name="Tallada V.A."/>
            <person name="Garzon A."/>
            <person name="Thode G."/>
            <person name="Daga R.R."/>
            <person name="Cruzado L."/>
            <person name="Jimenez J."/>
            <person name="Sanchez M."/>
            <person name="del Rey F."/>
            <person name="Benito J."/>
            <person name="Dominguez A."/>
            <person name="Revuelta J.L."/>
            <person name="Moreno S."/>
            <person name="Armstrong J."/>
            <person name="Forsburg S.L."/>
            <person name="Cerutti L."/>
            <person name="Lowe T."/>
            <person name="McCombie W.R."/>
            <person name="Paulsen I."/>
            <person name="Potashkin J."/>
            <person name="Shpakovski G.V."/>
            <person name="Ussery D."/>
            <person name="Barrell B.G."/>
            <person name="Nurse P."/>
        </authorList>
    </citation>
    <scope>NUCLEOTIDE SEQUENCE [LARGE SCALE GENOMIC DNA]</scope>
    <source>
        <strain>972 / ATCC 24843</strain>
    </source>
</reference>
<accession>P87150</accession>
<organism>
    <name type="scientific">Schizosaccharomyces pombe (strain 972 / ATCC 24843)</name>
    <name type="common">Fission yeast</name>
    <dbReference type="NCBI Taxonomy" id="284812"/>
    <lineage>
        <taxon>Eukaryota</taxon>
        <taxon>Fungi</taxon>
        <taxon>Dikarya</taxon>
        <taxon>Ascomycota</taxon>
        <taxon>Taphrinomycotina</taxon>
        <taxon>Schizosaccharomycetes</taxon>
        <taxon>Schizosaccharomycetales</taxon>
        <taxon>Schizosaccharomycetaceae</taxon>
        <taxon>Schizosaccharomyces</taxon>
    </lineage>
</organism>
<feature type="chain" id="PRO_0000116491" description="MICOS complex subunit mic19">
    <location>
        <begin position="1"/>
        <end position="162"/>
    </location>
</feature>
<keyword id="KW-0472">Membrane</keyword>
<keyword id="KW-0496">Mitochondrion</keyword>
<keyword id="KW-0999">Mitochondrion inner membrane</keyword>
<keyword id="KW-1185">Reference proteome</keyword>
<comment type="function">
    <text evidence="1">Component of the MICOS complex, a large protein complex of the mitochondrial inner membrane that plays crucial roles in the maintenance of crista junctions, inner membrane architecture, and formation of contact sites to the outer membrane.</text>
</comment>
<comment type="subunit">
    <text evidence="1">Component of the mitochondrial contact site and cristae organizing system (MICOS) complex.</text>
</comment>
<comment type="subcellular location">
    <subcellularLocation>
        <location evidence="1">Mitochondrion inner membrane</location>
        <topology evidence="1">Peripheral membrane protein</topology>
        <orientation evidence="1">Intermembrane side</orientation>
    </subcellularLocation>
</comment>
<comment type="similarity">
    <text evidence="2">Belongs to the MICOS complex subunit Mic19 family.</text>
</comment>
<protein>
    <recommendedName>
        <fullName>MICOS complex subunit mic19</fullName>
    </recommendedName>
</protein>
<sequence>MGNQQSQPEFVLRAPTEFSEKFVRHLQESTETDTSRYMDMENYIQKRVQDELKQLQLRQKKAIDAIQEEEWKSNAKTIKDSQGSLDSNLLSAEFRSFQEKLEKQSSINDKELKIKLKEVESIRSDLLKCMSEHPDKSLICHPLAEKFAILASKLHNPKVGSV</sequence>